<gene>
    <name evidence="1" type="primary">pncB</name>
    <name type="ordered locus">SBO_2222</name>
</gene>
<evidence type="ECO:0000255" key="1">
    <source>
        <dbReference type="HAMAP-Rule" id="MF_00570"/>
    </source>
</evidence>
<reference key="1">
    <citation type="journal article" date="2005" name="Nucleic Acids Res.">
        <title>Genome dynamics and diversity of Shigella species, the etiologic agents of bacillary dysentery.</title>
        <authorList>
            <person name="Yang F."/>
            <person name="Yang J."/>
            <person name="Zhang X."/>
            <person name="Chen L."/>
            <person name="Jiang Y."/>
            <person name="Yan Y."/>
            <person name="Tang X."/>
            <person name="Wang J."/>
            <person name="Xiong Z."/>
            <person name="Dong J."/>
            <person name="Xue Y."/>
            <person name="Zhu Y."/>
            <person name="Xu X."/>
            <person name="Sun L."/>
            <person name="Chen S."/>
            <person name="Nie H."/>
            <person name="Peng J."/>
            <person name="Xu J."/>
            <person name="Wang Y."/>
            <person name="Yuan Z."/>
            <person name="Wen Y."/>
            <person name="Yao Z."/>
            <person name="Shen Y."/>
            <person name="Qiang B."/>
            <person name="Hou Y."/>
            <person name="Yu J."/>
            <person name="Jin Q."/>
        </authorList>
    </citation>
    <scope>NUCLEOTIDE SEQUENCE [LARGE SCALE GENOMIC DNA]</scope>
    <source>
        <strain>Sb227</strain>
    </source>
</reference>
<organism>
    <name type="scientific">Shigella boydii serotype 4 (strain Sb227)</name>
    <dbReference type="NCBI Taxonomy" id="300268"/>
    <lineage>
        <taxon>Bacteria</taxon>
        <taxon>Pseudomonadati</taxon>
        <taxon>Pseudomonadota</taxon>
        <taxon>Gammaproteobacteria</taxon>
        <taxon>Enterobacterales</taxon>
        <taxon>Enterobacteriaceae</taxon>
        <taxon>Shigella</taxon>
    </lineage>
</organism>
<comment type="function">
    <text evidence="1">Catalyzes the synthesis of beta-nicotinate D-ribonucleotide from nicotinate and 5-phospho-D-ribose 1-phosphate at the expense of ATP.</text>
</comment>
<comment type="catalytic activity">
    <reaction evidence="1">
        <text>nicotinate + 5-phospho-alpha-D-ribose 1-diphosphate + ATP + H2O = nicotinate beta-D-ribonucleotide + ADP + phosphate + diphosphate</text>
        <dbReference type="Rhea" id="RHEA:36163"/>
        <dbReference type="ChEBI" id="CHEBI:15377"/>
        <dbReference type="ChEBI" id="CHEBI:30616"/>
        <dbReference type="ChEBI" id="CHEBI:32544"/>
        <dbReference type="ChEBI" id="CHEBI:33019"/>
        <dbReference type="ChEBI" id="CHEBI:43474"/>
        <dbReference type="ChEBI" id="CHEBI:57502"/>
        <dbReference type="ChEBI" id="CHEBI:58017"/>
        <dbReference type="ChEBI" id="CHEBI:456216"/>
        <dbReference type="EC" id="6.3.4.21"/>
    </reaction>
</comment>
<comment type="pathway">
    <text evidence="1">Cofactor biosynthesis; NAD(+) biosynthesis; nicotinate D-ribonucleotide from nicotinate: step 1/1.</text>
</comment>
<comment type="PTM">
    <text evidence="1">Transiently phosphorylated on a His residue during the reaction cycle. Phosphorylation strongly increases the affinity for substrates and increases the rate of nicotinate D-ribonucleotide production. Dephosphorylation regenerates the low-affinity form of the enzyme, leading to product release.</text>
</comment>
<comment type="similarity">
    <text evidence="1">Belongs to the NAPRTase family.</text>
</comment>
<protein>
    <recommendedName>
        <fullName evidence="1">Nicotinate phosphoribosyltransferase</fullName>
        <shortName evidence="1">NAPRTase</shortName>
        <ecNumber evidence="1">6.3.4.21</ecNumber>
    </recommendedName>
</protein>
<keyword id="KW-0436">Ligase</keyword>
<keyword id="KW-0597">Phosphoprotein</keyword>
<keyword id="KW-0662">Pyridine nucleotide biosynthesis</keyword>
<dbReference type="EC" id="6.3.4.21" evidence="1"/>
<dbReference type="EMBL" id="CP000036">
    <property type="protein sequence ID" value="ABB66792.1"/>
    <property type="molecule type" value="Genomic_DNA"/>
</dbReference>
<dbReference type="RefSeq" id="WP_001297200.1">
    <property type="nucleotide sequence ID" value="NC_007613.1"/>
</dbReference>
<dbReference type="SMR" id="Q31YR6"/>
<dbReference type="GeneID" id="93776483"/>
<dbReference type="KEGG" id="sbo:SBO_2222"/>
<dbReference type="HOGENOM" id="CLU_030991_1_0_6"/>
<dbReference type="UniPathway" id="UPA00253">
    <property type="reaction ID" value="UER00457"/>
</dbReference>
<dbReference type="Proteomes" id="UP000007067">
    <property type="component" value="Chromosome"/>
</dbReference>
<dbReference type="GO" id="GO:0005829">
    <property type="term" value="C:cytosol"/>
    <property type="evidence" value="ECO:0007669"/>
    <property type="project" value="TreeGrafter"/>
</dbReference>
<dbReference type="GO" id="GO:0004516">
    <property type="term" value="F:nicotinate phosphoribosyltransferase activity"/>
    <property type="evidence" value="ECO:0007669"/>
    <property type="project" value="UniProtKB-UniRule"/>
</dbReference>
<dbReference type="GO" id="GO:0034355">
    <property type="term" value="P:NAD biosynthetic process via the salvage pathway"/>
    <property type="evidence" value="ECO:0007669"/>
    <property type="project" value="TreeGrafter"/>
</dbReference>
<dbReference type="CDD" id="cd01401">
    <property type="entry name" value="PncB_like"/>
    <property type="match status" value="1"/>
</dbReference>
<dbReference type="FunFam" id="3.20.140.10:FF:000001">
    <property type="entry name" value="Nicotinate phosphoribosyltransferase"/>
    <property type="match status" value="1"/>
</dbReference>
<dbReference type="Gene3D" id="3.20.140.10">
    <property type="entry name" value="nicotinate phosphoribosyltransferase"/>
    <property type="match status" value="1"/>
</dbReference>
<dbReference type="HAMAP" id="MF_00570">
    <property type="entry name" value="NAPRTase"/>
    <property type="match status" value="1"/>
</dbReference>
<dbReference type="InterPro" id="IPR041525">
    <property type="entry name" value="N/Namide_PRibTrfase"/>
</dbReference>
<dbReference type="InterPro" id="IPR040727">
    <property type="entry name" value="NAPRTase_N"/>
</dbReference>
<dbReference type="InterPro" id="IPR006406">
    <property type="entry name" value="Nic_PRibTrfase"/>
</dbReference>
<dbReference type="InterPro" id="IPR007229">
    <property type="entry name" value="Nic_PRibTrfase-Fam"/>
</dbReference>
<dbReference type="InterPro" id="IPR036068">
    <property type="entry name" value="Nicotinate_pribotase-like_C"/>
</dbReference>
<dbReference type="NCBIfam" id="TIGR01514">
    <property type="entry name" value="NAPRTase"/>
    <property type="match status" value="1"/>
</dbReference>
<dbReference type="NCBIfam" id="NF003704">
    <property type="entry name" value="PRK05321.1"/>
    <property type="match status" value="1"/>
</dbReference>
<dbReference type="PANTHER" id="PTHR11098">
    <property type="entry name" value="NICOTINATE PHOSPHORIBOSYLTRANSFERASE"/>
    <property type="match status" value="1"/>
</dbReference>
<dbReference type="PANTHER" id="PTHR11098:SF1">
    <property type="entry name" value="NICOTINATE PHOSPHORIBOSYLTRANSFERASE"/>
    <property type="match status" value="1"/>
</dbReference>
<dbReference type="Pfam" id="PF04095">
    <property type="entry name" value="NAPRTase"/>
    <property type="match status" value="1"/>
</dbReference>
<dbReference type="Pfam" id="PF17767">
    <property type="entry name" value="NAPRTase_N"/>
    <property type="match status" value="1"/>
</dbReference>
<dbReference type="PIRSF" id="PIRSF000484">
    <property type="entry name" value="NAPRT"/>
    <property type="match status" value="1"/>
</dbReference>
<dbReference type="SUPFAM" id="SSF51690">
    <property type="entry name" value="Nicotinate/Quinolinate PRTase C-terminal domain-like"/>
    <property type="match status" value="1"/>
</dbReference>
<dbReference type="SUPFAM" id="SSF54675">
    <property type="entry name" value="Nicotinate/Quinolinate PRTase N-terminal domain-like"/>
    <property type="match status" value="1"/>
</dbReference>
<name>PNCB_SHIBS</name>
<feature type="chain" id="PRO_1000025011" description="Nicotinate phosphoribosyltransferase">
    <location>
        <begin position="1"/>
        <end position="400"/>
    </location>
</feature>
<feature type="modified residue" description="Phosphohistidine; by autocatalysis" evidence="1">
    <location>
        <position position="220"/>
    </location>
</feature>
<accession>Q31YR6</accession>
<proteinExistence type="inferred from homology"/>
<sequence length="400" mass="45911">MTQFASPVLHSLLDTDAYKLHMQQAVFHHYYDVHVAAEFRCRGDDLLGIYADAIREQIQAMQHLRLQDDEYQWLSALPFFKADYLNWLREFRFNPEQVTVSNDNGKLDIRLSGPWREVILWEVPLLAVISEMVHRYRSPQADVAQALDTLESKLVDFSALTAGLDMSRFHLMDFGTRRRFSREVQETIVKRLQQESWFVGTSNYDLARRLSLTPMGTQAHEWFQAHQQISPDLANSQRAALAAWLEEYPDQLGIALTDCITMDAFLRDFGVEFASRYQGLRHDSGDPVEWGEKAIAHYEKLGIDPQSKTLVFSDNLDLRKAVELYRHFSSRVQLSFGIGTRLTCDIPQVKPLNIVIKLVECNGKPVAKLSDSPGKTICHDKAFVRALRKAFDLPHIKKAS</sequence>